<comment type="function">
    <text evidence="1">The glycine cleavage system catalyzes the degradation of glycine. The P protein binds the alpha-amino group of glycine through its pyridoxal phosphate cofactor; CO(2) is released and the remaining methylamine moiety is then transferred to the lipoamide cofactor of the H protein.</text>
</comment>
<comment type="catalytic activity">
    <reaction evidence="1">
        <text>N(6)-[(R)-lipoyl]-L-lysyl-[glycine-cleavage complex H protein] + glycine + H(+) = N(6)-[(R)-S(8)-aminomethyldihydrolipoyl]-L-lysyl-[glycine-cleavage complex H protein] + CO2</text>
        <dbReference type="Rhea" id="RHEA:24304"/>
        <dbReference type="Rhea" id="RHEA-COMP:10494"/>
        <dbReference type="Rhea" id="RHEA-COMP:10495"/>
        <dbReference type="ChEBI" id="CHEBI:15378"/>
        <dbReference type="ChEBI" id="CHEBI:16526"/>
        <dbReference type="ChEBI" id="CHEBI:57305"/>
        <dbReference type="ChEBI" id="CHEBI:83099"/>
        <dbReference type="ChEBI" id="CHEBI:83143"/>
        <dbReference type="EC" id="1.4.4.2"/>
    </reaction>
</comment>
<comment type="cofactor">
    <cofactor evidence="1">
        <name>pyridoxal 5'-phosphate</name>
        <dbReference type="ChEBI" id="CHEBI:597326"/>
    </cofactor>
</comment>
<comment type="subunit">
    <text evidence="1">The glycine cleavage system is composed of four proteins: P, T, L and H. In this organism, the P 'protein' is a heterodimer of two subunits.</text>
</comment>
<comment type="similarity">
    <text evidence="1">Belongs to the GcvP family. C-terminal subunit subfamily.</text>
</comment>
<dbReference type="EC" id="1.4.4.2" evidence="1"/>
<dbReference type="EMBL" id="CP000817">
    <property type="protein sequence ID" value="ACA41093.1"/>
    <property type="molecule type" value="Genomic_DNA"/>
</dbReference>
<dbReference type="RefSeq" id="WP_012295152.1">
    <property type="nucleotide sequence ID" value="NC_010382.1"/>
</dbReference>
<dbReference type="SMR" id="B1HSN5"/>
<dbReference type="EnsemblBacteria" id="ACA41093">
    <property type="protein sequence ID" value="ACA41093"/>
    <property type="gene ID" value="Bsph_3607"/>
</dbReference>
<dbReference type="KEGG" id="lsp:Bsph_3607"/>
<dbReference type="HOGENOM" id="CLU_004620_5_0_9"/>
<dbReference type="Proteomes" id="UP000002164">
    <property type="component" value="Chromosome"/>
</dbReference>
<dbReference type="GO" id="GO:0005829">
    <property type="term" value="C:cytosol"/>
    <property type="evidence" value="ECO:0007669"/>
    <property type="project" value="TreeGrafter"/>
</dbReference>
<dbReference type="GO" id="GO:0005960">
    <property type="term" value="C:glycine cleavage complex"/>
    <property type="evidence" value="ECO:0007669"/>
    <property type="project" value="TreeGrafter"/>
</dbReference>
<dbReference type="GO" id="GO:0016594">
    <property type="term" value="F:glycine binding"/>
    <property type="evidence" value="ECO:0007669"/>
    <property type="project" value="TreeGrafter"/>
</dbReference>
<dbReference type="GO" id="GO:0004375">
    <property type="term" value="F:glycine dehydrogenase (decarboxylating) activity"/>
    <property type="evidence" value="ECO:0007669"/>
    <property type="project" value="UniProtKB-EC"/>
</dbReference>
<dbReference type="GO" id="GO:0030170">
    <property type="term" value="F:pyridoxal phosphate binding"/>
    <property type="evidence" value="ECO:0007669"/>
    <property type="project" value="TreeGrafter"/>
</dbReference>
<dbReference type="GO" id="GO:0019464">
    <property type="term" value="P:glycine decarboxylation via glycine cleavage system"/>
    <property type="evidence" value="ECO:0007669"/>
    <property type="project" value="UniProtKB-UniRule"/>
</dbReference>
<dbReference type="CDD" id="cd00613">
    <property type="entry name" value="GDC-P"/>
    <property type="match status" value="1"/>
</dbReference>
<dbReference type="FunFam" id="3.40.640.10:FF:000034">
    <property type="entry name" value="Probable glycine dehydrogenase (decarboxylating) subunit 2"/>
    <property type="match status" value="1"/>
</dbReference>
<dbReference type="FunFam" id="3.90.1150.10:FF:000014">
    <property type="entry name" value="Probable glycine dehydrogenase (decarboxylating) subunit 2"/>
    <property type="match status" value="1"/>
</dbReference>
<dbReference type="Gene3D" id="6.20.440.10">
    <property type="match status" value="1"/>
</dbReference>
<dbReference type="Gene3D" id="3.90.1150.10">
    <property type="entry name" value="Aspartate Aminotransferase, domain 1"/>
    <property type="match status" value="1"/>
</dbReference>
<dbReference type="Gene3D" id="3.40.640.10">
    <property type="entry name" value="Type I PLP-dependent aspartate aminotransferase-like (Major domain)"/>
    <property type="match status" value="1"/>
</dbReference>
<dbReference type="HAMAP" id="MF_00713">
    <property type="entry name" value="GcvPB"/>
    <property type="match status" value="1"/>
</dbReference>
<dbReference type="InterPro" id="IPR023012">
    <property type="entry name" value="GcvPB"/>
</dbReference>
<dbReference type="InterPro" id="IPR049316">
    <property type="entry name" value="GDC-P_C"/>
</dbReference>
<dbReference type="InterPro" id="IPR049315">
    <property type="entry name" value="GDC-P_N"/>
</dbReference>
<dbReference type="InterPro" id="IPR020581">
    <property type="entry name" value="GDC_P"/>
</dbReference>
<dbReference type="InterPro" id="IPR015424">
    <property type="entry name" value="PyrdxlP-dep_Trfase"/>
</dbReference>
<dbReference type="InterPro" id="IPR015421">
    <property type="entry name" value="PyrdxlP-dep_Trfase_major"/>
</dbReference>
<dbReference type="InterPro" id="IPR015422">
    <property type="entry name" value="PyrdxlP-dep_Trfase_small"/>
</dbReference>
<dbReference type="NCBIfam" id="NF003346">
    <property type="entry name" value="PRK04366.1"/>
    <property type="match status" value="1"/>
</dbReference>
<dbReference type="PANTHER" id="PTHR11773:SF1">
    <property type="entry name" value="GLYCINE DEHYDROGENASE (DECARBOXYLATING), MITOCHONDRIAL"/>
    <property type="match status" value="1"/>
</dbReference>
<dbReference type="PANTHER" id="PTHR11773">
    <property type="entry name" value="GLYCINE DEHYDROGENASE, DECARBOXYLATING"/>
    <property type="match status" value="1"/>
</dbReference>
<dbReference type="Pfam" id="PF21478">
    <property type="entry name" value="GcvP2_C"/>
    <property type="match status" value="1"/>
</dbReference>
<dbReference type="Pfam" id="PF02347">
    <property type="entry name" value="GDC-P"/>
    <property type="match status" value="1"/>
</dbReference>
<dbReference type="SUPFAM" id="SSF53383">
    <property type="entry name" value="PLP-dependent transferases"/>
    <property type="match status" value="1"/>
</dbReference>
<reference key="1">
    <citation type="journal article" date="2008" name="J. Bacteriol.">
        <title>Complete genome sequence of the mosquitocidal bacterium Bacillus sphaericus C3-41 and comparison with those of closely related Bacillus species.</title>
        <authorList>
            <person name="Hu X."/>
            <person name="Fan W."/>
            <person name="Han B."/>
            <person name="Liu H."/>
            <person name="Zheng D."/>
            <person name="Li Q."/>
            <person name="Dong W."/>
            <person name="Yan J."/>
            <person name="Gao M."/>
            <person name="Berry C."/>
            <person name="Yuan Z."/>
        </authorList>
    </citation>
    <scope>NUCLEOTIDE SEQUENCE [LARGE SCALE GENOMIC DNA]</scope>
    <source>
        <strain>C3-41</strain>
    </source>
</reference>
<keyword id="KW-0560">Oxidoreductase</keyword>
<keyword id="KW-0663">Pyridoxal phosphate</keyword>
<organism>
    <name type="scientific">Lysinibacillus sphaericus (strain C3-41)</name>
    <dbReference type="NCBI Taxonomy" id="444177"/>
    <lineage>
        <taxon>Bacteria</taxon>
        <taxon>Bacillati</taxon>
        <taxon>Bacillota</taxon>
        <taxon>Bacilli</taxon>
        <taxon>Bacillales</taxon>
        <taxon>Bacillaceae</taxon>
        <taxon>Lysinibacillus</taxon>
    </lineage>
</organism>
<accession>B1HSN5</accession>
<sequence length="487" mass="53763">MHNENQTLIFEISKEGRVGYSLEALDVPEVDLADVLPANLVRSEAAELPEVSELDIMRHYTALSRRNHGVDSGFYPLGSCTMKYNPKINEAVARFSGFANVHPLQDESTAQGAMELLYDLQTSLVEITGMDEVTLQPAAGAHGEWTALMMIRAFHEANGEGHRNKVIVPDSAHGTNPASATVAGFETITVKSDDNGLVDIEDLRKVVGADTAALMLTNPNTLGLFEENIIEMAELIHSVGGKVYYDGANLNAVMSKARPGDMGFDCVHLNLHKTFTGPHGGGGPGSGPVGVKADLIPFLPKPVLVRTEEGAYHFDYNRPQSIGRVKPYYGNFGINVRAYTYIRTMGPDGLKAVTEYAVLNANYMMRRLEPFYDLPYNRHCKHEFVLSGHRQKKLGVRTLDIAKRLLDFGYHPPTTYFPLNVEEALMIEPTETESKETLDAFCDVMIQIAKEAEENPSIVQEAPHTTVVSRLDETRAARTPVLRYQKA</sequence>
<gene>
    <name evidence="1" type="primary">gcvPB</name>
    <name type="ordered locus">Bsph_3607</name>
</gene>
<protein>
    <recommendedName>
        <fullName evidence="1">Probable glycine dehydrogenase (decarboxylating) subunit 2</fullName>
        <ecNumber evidence="1">1.4.4.2</ecNumber>
    </recommendedName>
    <alternativeName>
        <fullName evidence="1">Glycine cleavage system P-protein subunit 2</fullName>
    </alternativeName>
    <alternativeName>
        <fullName evidence="1">Glycine decarboxylase subunit 2</fullName>
    </alternativeName>
    <alternativeName>
        <fullName evidence="1">Glycine dehydrogenase (aminomethyl-transferring) subunit 2</fullName>
    </alternativeName>
</protein>
<proteinExistence type="inferred from homology"/>
<evidence type="ECO:0000255" key="1">
    <source>
        <dbReference type="HAMAP-Rule" id="MF_00713"/>
    </source>
</evidence>
<name>GCSPB_LYSSC</name>
<feature type="chain" id="PRO_1000132502" description="Probable glycine dehydrogenase (decarboxylating) subunit 2">
    <location>
        <begin position="1"/>
        <end position="487"/>
    </location>
</feature>
<feature type="modified residue" description="N6-(pyridoxal phosphate)lysine" evidence="1">
    <location>
        <position position="273"/>
    </location>
</feature>